<sequence length="522" mass="59125">MAFLDNPTIILAHIRQSHVTSDDTGMCEMVLIDHDVDLEKIHPPSMPGDSGSEIQGSNGETQGYVYAQSVDITSSWDFGIRRRSNTAQRLERLRKERQNQIKCKNIQWKERNSKQSAQELKSLFEKKSLKEKPPNSGKQSILSVRLEQCPLQLNNPFNEYSKFDGKGHVGTTATKKIDVYLPLHSSQDRLLPMTVVTMASARVQDLIGLICWQYTSEGREPKLNDNVSAYCLHIAEDDGEVDTDFPPLDSNEPIHKFGFSTLALVEKYSSPGLTSKESLFVRINAAHGFSLIQVDNTKVTMKEILLKAVKRRKGSQKISGPQYRLEKQSEPNVAVDLESTLESQSAWEFCLVRENSSRADGVFEEDSQIDIATVQDMLSSHHYKSFKVSMIHRLRFTTDVQLGISGDKVEIDPVTSQKASTKFWIKQKPISIDSDLLCACDLAEEKSPSHAIFKLTYLSNHDYKHLYFESDAATVNEIVLKVNYILESRASTARADYFAQKQRKLNRRTSFSFQKEKKSGQQ</sequence>
<reference key="1">
    <citation type="submission" date="2007-02" db="EMBL/GenBank/DDBJ databases">
        <authorList>
            <consortium name="NIH - Mammalian Gene Collection (MGC) project"/>
        </authorList>
    </citation>
    <scope>NUCLEOTIDE SEQUENCE [LARGE SCALE MRNA]</scope>
    <source>
        <strain>Hereford</strain>
        <tissue>Ascending colon</tissue>
    </source>
</reference>
<accession>A2VDU2</accession>
<dbReference type="EMBL" id="BC133402">
    <property type="protein sequence ID" value="AAI33403.1"/>
    <property type="molecule type" value="mRNA"/>
</dbReference>
<dbReference type="RefSeq" id="NP_001075072.1">
    <property type="nucleotide sequence ID" value="NM_001081603.2"/>
</dbReference>
<dbReference type="RefSeq" id="XP_005213197.1">
    <property type="nucleotide sequence ID" value="XM_005213140.5"/>
</dbReference>
<dbReference type="RefSeq" id="XP_005213198.1">
    <property type="nucleotide sequence ID" value="XM_005213141.5"/>
</dbReference>
<dbReference type="RefSeq" id="XP_005213202.1">
    <property type="nucleotide sequence ID" value="XM_005213145.5"/>
</dbReference>
<dbReference type="RefSeq" id="XP_010808649.1">
    <property type="nucleotide sequence ID" value="XM_010810347.2"/>
</dbReference>
<dbReference type="RefSeq" id="XP_010808650.1">
    <property type="nucleotide sequence ID" value="XM_010810348.4"/>
</dbReference>
<dbReference type="RefSeq" id="XP_024854592.1">
    <property type="nucleotide sequence ID" value="XM_024998824.2"/>
</dbReference>
<dbReference type="RefSeq" id="XP_059747310.1">
    <property type="nucleotide sequence ID" value="XM_059891327.1"/>
</dbReference>
<dbReference type="SMR" id="A2VDU2"/>
<dbReference type="FunCoup" id="A2VDU2">
    <property type="interactions" value="4739"/>
</dbReference>
<dbReference type="STRING" id="9913.ENSBTAP00000063173"/>
<dbReference type="PaxDb" id="9913-ENSBTAP00000013577"/>
<dbReference type="Ensembl" id="ENSBTAT00000013577.5">
    <property type="protein sequence ID" value="ENSBTAP00000013577.3"/>
    <property type="gene ID" value="ENSBTAG00000010271.5"/>
</dbReference>
<dbReference type="GeneID" id="533861"/>
<dbReference type="KEGG" id="bta:533861"/>
<dbReference type="CTD" id="79109"/>
<dbReference type="VEuPathDB" id="HostDB:ENSBTAG00000010271"/>
<dbReference type="VGNC" id="VGNC:31228">
    <property type="gene designation" value="MAPKAP1"/>
</dbReference>
<dbReference type="eggNOG" id="KOG3739">
    <property type="taxonomic scope" value="Eukaryota"/>
</dbReference>
<dbReference type="GeneTree" id="ENSGT00390000000642"/>
<dbReference type="HOGENOM" id="CLU_514767_0_0_1"/>
<dbReference type="InParanoid" id="A2VDU2"/>
<dbReference type="OMA" id="NAKFWPQ"/>
<dbReference type="OrthoDB" id="241990at2759"/>
<dbReference type="TreeFam" id="TF315174"/>
<dbReference type="Proteomes" id="UP000009136">
    <property type="component" value="Chromosome 11"/>
</dbReference>
<dbReference type="Bgee" id="ENSBTAG00000010271">
    <property type="expression patterns" value="Expressed in granulosa cell and 102 other cell types or tissues"/>
</dbReference>
<dbReference type="GO" id="GO:0005929">
    <property type="term" value="C:cilium"/>
    <property type="evidence" value="ECO:0007669"/>
    <property type="project" value="Ensembl"/>
</dbReference>
<dbReference type="GO" id="GO:0005737">
    <property type="term" value="C:cytoplasm"/>
    <property type="evidence" value="ECO:0000318"/>
    <property type="project" value="GO_Central"/>
</dbReference>
<dbReference type="GO" id="GO:0005829">
    <property type="term" value="C:cytosol"/>
    <property type="evidence" value="ECO:0007669"/>
    <property type="project" value="Ensembl"/>
</dbReference>
<dbReference type="GO" id="GO:0005769">
    <property type="term" value="C:early endosome"/>
    <property type="evidence" value="ECO:0000250"/>
    <property type="project" value="UniProtKB"/>
</dbReference>
<dbReference type="GO" id="GO:0031901">
    <property type="term" value="C:early endosome membrane"/>
    <property type="evidence" value="ECO:0007669"/>
    <property type="project" value="UniProtKB-SubCell"/>
</dbReference>
<dbReference type="GO" id="GO:0005783">
    <property type="term" value="C:endoplasmic reticulum"/>
    <property type="evidence" value="ECO:0000250"/>
    <property type="project" value="UniProtKB"/>
</dbReference>
<dbReference type="GO" id="GO:0005789">
    <property type="term" value="C:endoplasmic reticulum membrane"/>
    <property type="evidence" value="ECO:0007669"/>
    <property type="project" value="UniProtKB-SubCell"/>
</dbReference>
<dbReference type="GO" id="GO:0000139">
    <property type="term" value="C:Golgi membrane"/>
    <property type="evidence" value="ECO:0007669"/>
    <property type="project" value="UniProtKB-SubCell"/>
</dbReference>
<dbReference type="GO" id="GO:0005770">
    <property type="term" value="C:late endosome"/>
    <property type="evidence" value="ECO:0000250"/>
    <property type="project" value="UniProtKB"/>
</dbReference>
<dbReference type="GO" id="GO:0031902">
    <property type="term" value="C:late endosome membrane"/>
    <property type="evidence" value="ECO:0007669"/>
    <property type="project" value="UniProtKB-SubCell"/>
</dbReference>
<dbReference type="GO" id="GO:0005765">
    <property type="term" value="C:lysosomal membrane"/>
    <property type="evidence" value="ECO:0007669"/>
    <property type="project" value="UniProtKB-SubCell"/>
</dbReference>
<dbReference type="GO" id="GO:0005764">
    <property type="term" value="C:lysosome"/>
    <property type="evidence" value="ECO:0000250"/>
    <property type="project" value="UniProtKB"/>
</dbReference>
<dbReference type="GO" id="GO:0005741">
    <property type="term" value="C:mitochondrial outer membrane"/>
    <property type="evidence" value="ECO:0000250"/>
    <property type="project" value="UniProtKB"/>
</dbReference>
<dbReference type="GO" id="GO:0005654">
    <property type="term" value="C:nucleoplasm"/>
    <property type="evidence" value="ECO:0007669"/>
    <property type="project" value="Ensembl"/>
</dbReference>
<dbReference type="GO" id="GO:0048471">
    <property type="term" value="C:perinuclear region of cytoplasm"/>
    <property type="evidence" value="ECO:0007669"/>
    <property type="project" value="UniProtKB-SubCell"/>
</dbReference>
<dbReference type="GO" id="GO:0005886">
    <property type="term" value="C:plasma membrane"/>
    <property type="evidence" value="ECO:0000318"/>
    <property type="project" value="GO_Central"/>
</dbReference>
<dbReference type="GO" id="GO:1902554">
    <property type="term" value="C:serine/threonine protein kinase complex"/>
    <property type="evidence" value="ECO:0007669"/>
    <property type="project" value="Ensembl"/>
</dbReference>
<dbReference type="GO" id="GO:0031932">
    <property type="term" value="C:TORC2 complex"/>
    <property type="evidence" value="ECO:0000250"/>
    <property type="project" value="UniProtKB"/>
</dbReference>
<dbReference type="GO" id="GO:0140767">
    <property type="term" value="F:enzyme-substrate adaptor activity"/>
    <property type="evidence" value="ECO:0000250"/>
    <property type="project" value="UniProtKB"/>
</dbReference>
<dbReference type="GO" id="GO:0070300">
    <property type="term" value="F:phosphatidic acid binding"/>
    <property type="evidence" value="ECO:0007669"/>
    <property type="project" value="Ensembl"/>
</dbReference>
<dbReference type="GO" id="GO:0005547">
    <property type="term" value="F:phosphatidylinositol-3,4,5-trisphosphate binding"/>
    <property type="evidence" value="ECO:0000250"/>
    <property type="project" value="UniProtKB"/>
</dbReference>
<dbReference type="GO" id="GO:0043325">
    <property type="term" value="F:phosphatidylinositol-3,4-bisphosphate binding"/>
    <property type="evidence" value="ECO:0007669"/>
    <property type="project" value="Ensembl"/>
</dbReference>
<dbReference type="GO" id="GO:0080025">
    <property type="term" value="F:phosphatidylinositol-3,5-bisphosphate binding"/>
    <property type="evidence" value="ECO:0007669"/>
    <property type="project" value="Ensembl"/>
</dbReference>
<dbReference type="GO" id="GO:0005546">
    <property type="term" value="F:phosphatidylinositol-4,5-bisphosphate binding"/>
    <property type="evidence" value="ECO:0000318"/>
    <property type="project" value="GO_Central"/>
</dbReference>
<dbReference type="GO" id="GO:0019901">
    <property type="term" value="F:protein kinase binding"/>
    <property type="evidence" value="ECO:0007669"/>
    <property type="project" value="Ensembl"/>
</dbReference>
<dbReference type="GO" id="GO:0031267">
    <property type="term" value="F:small GTPase binding"/>
    <property type="evidence" value="ECO:0007669"/>
    <property type="project" value="Ensembl"/>
</dbReference>
<dbReference type="GO" id="GO:0032869">
    <property type="term" value="P:cellular response to insulin stimulus"/>
    <property type="evidence" value="ECO:0000250"/>
    <property type="project" value="UniProtKB"/>
</dbReference>
<dbReference type="GO" id="GO:0046580">
    <property type="term" value="P:negative regulation of Ras protein signal transduction"/>
    <property type="evidence" value="ECO:0007669"/>
    <property type="project" value="Ensembl"/>
</dbReference>
<dbReference type="GO" id="GO:1900407">
    <property type="term" value="P:regulation of cellular response to oxidative stress"/>
    <property type="evidence" value="ECO:0007669"/>
    <property type="project" value="Ensembl"/>
</dbReference>
<dbReference type="GO" id="GO:0038203">
    <property type="term" value="P:TORC2 signaling"/>
    <property type="evidence" value="ECO:0000250"/>
    <property type="project" value="UniProtKB"/>
</dbReference>
<dbReference type="CDD" id="cd13331">
    <property type="entry name" value="PH_Avo1"/>
    <property type="match status" value="1"/>
</dbReference>
<dbReference type="FunFam" id="2.30.29.30:FF:000585">
    <property type="entry name" value="target of rapamycin complex 2 subunit MAPKAP1 isoform X3"/>
    <property type="match status" value="1"/>
</dbReference>
<dbReference type="Gene3D" id="2.30.29.30">
    <property type="entry name" value="Pleckstrin-homology domain (PH domain)/Phosphotyrosine-binding domain (PTB)"/>
    <property type="match status" value="1"/>
</dbReference>
<dbReference type="InterPro" id="IPR031567">
    <property type="entry name" value="CRIM_dom"/>
</dbReference>
<dbReference type="InterPro" id="IPR011993">
    <property type="entry name" value="PH-like_dom_sf"/>
</dbReference>
<dbReference type="InterPro" id="IPR008828">
    <property type="entry name" value="Sin1/Avo1"/>
</dbReference>
<dbReference type="InterPro" id="IPR032679">
    <property type="entry name" value="Sin1_N"/>
</dbReference>
<dbReference type="InterPro" id="IPR031313">
    <property type="entry name" value="Sin1_PH_dom"/>
</dbReference>
<dbReference type="PANTHER" id="PTHR13335">
    <property type="entry name" value="TARGET OF RAPAMYCIN COMPLEX 2 SUBUNIT MAPKAP1"/>
    <property type="match status" value="1"/>
</dbReference>
<dbReference type="PANTHER" id="PTHR13335:SF1">
    <property type="entry name" value="TARGET OF RAPAMYCIN COMPLEX 2 SUBUNIT MAPKAP1"/>
    <property type="match status" value="1"/>
</dbReference>
<dbReference type="Pfam" id="PF16978">
    <property type="entry name" value="CRIM"/>
    <property type="match status" value="1"/>
</dbReference>
<dbReference type="Pfam" id="PF05422">
    <property type="entry name" value="SIN1"/>
    <property type="match status" value="1"/>
</dbReference>
<dbReference type="Pfam" id="PF16979">
    <property type="entry name" value="SIN1_PH"/>
    <property type="match status" value="1"/>
</dbReference>
<comment type="function">
    <text evidence="2 3">Component of the mechanistic target of rapamycin complex 2 (mTORC2), which transduces signals from growth factors to pathways involved in proliferation, cytoskeletal organization, lipogenesis and anabolic output (By similarity). In response to growth factors, mTORC2 phosphorylates and activates AGC protein kinase family members, including AKT (AKT1, AKT2 and AKT3), PKC (PRKCA, PRKCB and PRKCE) and SGK1 (By similarity). In contrast to mTORC1, mTORC2 is nutrient-insensitive (By similarity). Within the mTORC2 complex, MAPKAP1/SIN1 acts as a substrate adapter which recognizes and binds AGC protein kinase family members for phosphorylation by MTOR (By similarity). mTORC2 plays a critical role in AKT1 activation by mediating phosphorylation of different sites depending on the context, such as 'Thr-450', 'Ser-473', 'Ser-477' or 'Thr-479', facilitating the phosphorylation of the activation loop of AKT1 on 'Thr-308' by PDPK1/PDK1 which is a prerequisite for full activation (By similarity). mTORC2 catalyzes the phosphorylation of SGK1 at 'Ser-422' and of PRKCA on 'Ser-657' (By similarity). The mTORC2 complex also phosphorylates various proteins involved in insulin signaling, such as FBXW8 and IGF2BP1 (By similarity). mTORC2 acts upstream of Rho GTPases to regulate the actin cytoskeleton, probably by activating one or more Rho-type guanine nucleotide exchange factors (By similarity). mTORC2 promotes the serum-induced formation of stress-fibers or F-actin (By similarity). MAPKAP1 inhibits MAP3K2 by preventing its dimerization and autophosphorylation (By similarity). Inhibits HRAS and KRAS independently of mTORC2 complex (By similarity). Enhances osmotic stress-induced phosphorylation of ATF2 and ATF2-mediated transcription (By similarity). Involved in ciliogenesis, regulates cilia length through its interaction with CCDC28B independently of mTORC2 complex (By similarity).</text>
</comment>
<comment type="activity regulation">
    <text evidence="3">Phosphatidylinositol 3,4,5-trisphosphate (PI(3,4,5)P3) promotes MTOR activation by relieving MAPKAP1/SIN1-mediated inhibition of MTOR that takes place in absence of PI(3,4,5)P3.</text>
</comment>
<comment type="subunit">
    <text evidence="1 3">Component of the mechanistic target of rapamycin complex 2 (mTORC2), consisting in two heterotretramers composed of MTOR, MLST8, RICTOR and MAPKAP1/SIN1. The mTORC2 core complex associates with PRR5/PROTOR1 and/or PRR5L/PROTOR2. Contrary to mTORC1, mTORC2 does not bind to and is not sensitive to FKBP12-rapamycin. Interacts with MAP3K2. Interacts with ATF2. Interacts with MAPK8. Interacts with GTP-bound HRAS and KRAS; inhibiting their activity (By similarity). Interacts with IFNAR2 (By similarity).</text>
</comment>
<comment type="subcellular location">
    <subcellularLocation>
        <location evidence="3">Cell membrane</location>
        <topology evidence="3">Peripheral membrane protein</topology>
    </subcellularLocation>
    <subcellularLocation>
        <location evidence="3">Endoplasmic reticulum membrane</location>
        <topology evidence="3">Peripheral membrane protein</topology>
    </subcellularLocation>
    <subcellularLocation>
        <location evidence="3">Early endosome membrane</location>
        <topology evidence="3">Peripheral membrane protein</topology>
    </subcellularLocation>
    <subcellularLocation>
        <location evidence="3">Late endosome membrane</location>
        <topology evidence="3">Peripheral membrane protein</topology>
    </subcellularLocation>
    <subcellularLocation>
        <location evidence="3">Lysosome membrane</location>
        <topology evidence="3">Peripheral membrane protein</topology>
    </subcellularLocation>
    <subcellularLocation>
        <location evidence="3">Golgi apparatus membrane</location>
        <topology evidence="3">Peripheral membrane protein</topology>
    </subcellularLocation>
    <subcellularLocation>
        <location evidence="3">Mitochondrion outer membrane</location>
        <topology evidence="3">Peripheral membrane protein</topology>
    </subcellularLocation>
    <subcellularLocation>
        <location evidence="2">Cytoplasm</location>
        <location evidence="2">Perinuclear region</location>
    </subcellularLocation>
    <subcellularLocation>
        <location evidence="3">Nucleus</location>
    </subcellularLocation>
    <text evidence="2 3">The mTORC2 complex localizes to membranes: mTORC2 is active at the plasma membrane, endoplasmic reticulum membrane, lysosomes and perinuclear region. Iin lysosomal membrane, mTORC2 is sensitive to lysosomal positioning in the cell (By similarity). Following phosphorylation by PKC, localizes to the perinuclear region, where the mTORC2 complexe specifically phosphorylates SGK1, but not AKT (By similarity).</text>
</comment>
<comment type="domain">
    <text evidence="3">The CRIM domain forms a ubiquitin-like fold with a characteristic acidic loop, which recognizes and binds AGC protein kinase family members substrates.</text>
</comment>
<comment type="domain">
    <text evidence="3">The SIN1-type PH binds phosphatidylinositol 3,4,5-trisphosphate (PI(3,4,5)P3). It plays a dual role in mTORC2: in absence of PI(3,4,5)P3, it binds and inactivates MTOR. PI(3,4,5)P3-binding relieves the inhibition, leading to mTORC2 activation.</text>
</comment>
<comment type="PTM">
    <text evidence="2">Phosphorylation at Ser-128 by PKC promotes relocalization to the perinuclear region, where the mTORC2 complex specifically mediates phosphorylation of SGK1. Phosphorylated at Thr-86 by AKT1 or RPS6KB1 in the presence of growth factors; the effect of this phosphorylation is however unclear. According to two studies, phosphorylation at Thr-86 by AKT1 is part of a positive feedback loop that increases mTORC2 activation. According to another study, phosphorylation at Thr-86 and Thr-398 by RPS6KB1 promotes dissociation from the mTORC2 complex, leading to inhibit mTORC2 signaling.</text>
</comment>
<comment type="similarity">
    <text evidence="5">Belongs to the SIN1 family.</text>
</comment>
<keyword id="KW-0007">Acetylation</keyword>
<keyword id="KW-1003">Cell membrane</keyword>
<keyword id="KW-0963">Cytoplasm</keyword>
<keyword id="KW-0256">Endoplasmic reticulum</keyword>
<keyword id="KW-0967">Endosome</keyword>
<keyword id="KW-0333">Golgi apparatus</keyword>
<keyword id="KW-0458">Lysosome</keyword>
<keyword id="KW-0472">Membrane</keyword>
<keyword id="KW-0496">Mitochondrion</keyword>
<keyword id="KW-1000">Mitochondrion outer membrane</keyword>
<keyword id="KW-0539">Nucleus</keyword>
<keyword id="KW-0597">Phosphoprotein</keyword>
<keyword id="KW-1185">Reference proteome</keyword>
<keyword id="KW-0346">Stress response</keyword>
<proteinExistence type="evidence at transcript level"/>
<evidence type="ECO:0000250" key="1">
    <source>
        <dbReference type="UniProtKB" id="Q6QD73"/>
    </source>
</evidence>
<evidence type="ECO:0000250" key="2">
    <source>
        <dbReference type="UniProtKB" id="Q8BKH7"/>
    </source>
</evidence>
<evidence type="ECO:0000250" key="3">
    <source>
        <dbReference type="UniProtKB" id="Q9BPZ7"/>
    </source>
</evidence>
<evidence type="ECO:0000255" key="4"/>
<evidence type="ECO:0000305" key="5"/>
<gene>
    <name type="primary">MAPKAP1</name>
    <name type="synonym">SIN1</name>
</gene>
<organism>
    <name type="scientific">Bos taurus</name>
    <name type="common">Bovine</name>
    <dbReference type="NCBI Taxonomy" id="9913"/>
    <lineage>
        <taxon>Eukaryota</taxon>
        <taxon>Metazoa</taxon>
        <taxon>Chordata</taxon>
        <taxon>Craniata</taxon>
        <taxon>Vertebrata</taxon>
        <taxon>Euteleostomi</taxon>
        <taxon>Mammalia</taxon>
        <taxon>Eutheria</taxon>
        <taxon>Laurasiatheria</taxon>
        <taxon>Artiodactyla</taxon>
        <taxon>Ruminantia</taxon>
        <taxon>Pecora</taxon>
        <taxon>Bovidae</taxon>
        <taxon>Bovinae</taxon>
        <taxon>Bos</taxon>
    </lineage>
</organism>
<feature type="initiator methionine" description="Removed" evidence="3">
    <location>
        <position position="1"/>
    </location>
</feature>
<feature type="chain" id="PRO_0000331440" description="Target of rapamycin complex 2 subunit MAPKAP1">
    <location>
        <begin position="2"/>
        <end position="522"/>
    </location>
</feature>
<feature type="domain" description="CRIM" evidence="4">
    <location>
        <begin position="139"/>
        <end position="267"/>
    </location>
</feature>
<feature type="domain" description="SIN1-type PH" evidence="4">
    <location>
        <begin position="382"/>
        <end position="487"/>
    </location>
</feature>
<feature type="region of interest" description="Interaction with NBN" evidence="3">
    <location>
        <begin position="2"/>
        <end position="267"/>
    </location>
</feature>
<feature type="region of interest" description="Interaction with MAP3K2" evidence="3">
    <location>
        <begin position="2"/>
        <end position="184"/>
    </location>
</feature>
<feature type="region of interest" description="SIN1-type RBD" evidence="4">
    <location>
        <begin position="279"/>
        <end position="353"/>
    </location>
</feature>
<feature type="region of interest" description="Interaction with ATF2" evidence="3">
    <location>
        <begin position="468"/>
        <end position="522"/>
    </location>
</feature>
<feature type="binding site" evidence="3">
    <location>
        <position position="393"/>
    </location>
    <ligand>
        <name>a 1,2-diacyl-sn-glycero-3-phospho-(1D-myo-inositol-3,4,5-trisphosphate)</name>
        <dbReference type="ChEBI" id="CHEBI:57836"/>
    </ligand>
</feature>
<feature type="binding site" evidence="3">
    <location>
        <position position="428"/>
    </location>
    <ligand>
        <name>a 1,2-diacyl-sn-glycero-3-phospho-(1D-myo-inositol-3,4,5-trisphosphate)</name>
        <dbReference type="ChEBI" id="CHEBI:57836"/>
    </ligand>
</feature>
<feature type="binding site" evidence="3">
    <location>
        <position position="464"/>
    </location>
    <ligand>
        <name>a 1,2-diacyl-sn-glycero-3-phospho-(1D-myo-inositol-3,4,5-trisphosphate)</name>
        <dbReference type="ChEBI" id="CHEBI:57836"/>
    </ligand>
</feature>
<feature type="modified residue" description="N-acetylalanine" evidence="3">
    <location>
        <position position="2"/>
    </location>
</feature>
<feature type="modified residue" description="Phosphothreonine" evidence="3">
    <location>
        <position position="86"/>
    </location>
</feature>
<feature type="modified residue" description="Phosphoserine" evidence="3">
    <location>
        <position position="128"/>
    </location>
</feature>
<feature type="modified residue" description="Phosphoserine" evidence="3">
    <location>
        <position position="186"/>
    </location>
</feature>
<feature type="modified residue" description="Phosphoserine" evidence="3">
    <location>
        <position position="315"/>
    </location>
</feature>
<feature type="modified residue" description="Phosphoserine" evidence="3">
    <location>
        <position position="356"/>
    </location>
</feature>
<feature type="modified residue" description="Phosphothreonine" evidence="2">
    <location>
        <position position="398"/>
    </location>
</feature>
<feature type="modified residue" description="Phosphoserine" evidence="3">
    <location>
        <position position="510"/>
    </location>
</feature>
<protein>
    <recommendedName>
        <fullName>Target of rapamycin complex 2 subunit MAPKAP1</fullName>
    </recommendedName>
    <alternativeName>
        <fullName>Mitogen-activated protein kinase 2-associated protein 1</fullName>
    </alternativeName>
    <alternativeName>
        <fullName>Stress-activated map kinase-interacting protein 1</fullName>
        <shortName>SAPK-interacting protein 1</shortName>
    </alternativeName>
</protein>
<name>SIN1_BOVIN</name>